<proteinExistence type="inferred from homology"/>
<organism>
    <name type="scientific">Bifidobacterium longum (strain DJO10A)</name>
    <dbReference type="NCBI Taxonomy" id="205913"/>
    <lineage>
        <taxon>Bacteria</taxon>
        <taxon>Bacillati</taxon>
        <taxon>Actinomycetota</taxon>
        <taxon>Actinomycetes</taxon>
        <taxon>Bifidobacteriales</taxon>
        <taxon>Bifidobacteriaceae</taxon>
        <taxon>Bifidobacterium</taxon>
    </lineage>
</organism>
<keyword id="KW-0687">Ribonucleoprotein</keyword>
<keyword id="KW-0689">Ribosomal protein</keyword>
<evidence type="ECO:0000255" key="1">
    <source>
        <dbReference type="HAMAP-Rule" id="MF_00532"/>
    </source>
</evidence>
<evidence type="ECO:0000256" key="2">
    <source>
        <dbReference type="SAM" id="MobiDB-lite"/>
    </source>
</evidence>
<evidence type="ECO:0000305" key="3"/>
<protein>
    <recommendedName>
        <fullName evidence="1">Small ribosomal subunit protein uS9</fullName>
    </recommendedName>
    <alternativeName>
        <fullName evidence="3">30S ribosomal protein S9</fullName>
    </alternativeName>
</protein>
<comment type="similarity">
    <text evidence="1">Belongs to the universal ribosomal protein uS9 family.</text>
</comment>
<feature type="chain" id="PRO_1000128084" description="Small ribosomal subunit protein uS9">
    <location>
        <begin position="1"/>
        <end position="163"/>
    </location>
</feature>
<feature type="region of interest" description="Disordered" evidence="2">
    <location>
        <begin position="1"/>
        <end position="40"/>
    </location>
</feature>
<feature type="compositionally biased region" description="Polar residues" evidence="2">
    <location>
        <begin position="1"/>
        <end position="11"/>
    </location>
</feature>
<feature type="compositionally biased region" description="Low complexity" evidence="2">
    <location>
        <begin position="18"/>
        <end position="27"/>
    </location>
</feature>
<accession>B3DQ00</accession>
<gene>
    <name evidence="1" type="primary">rpsI</name>
    <name type="ordered locus">BLD_1694</name>
</gene>
<dbReference type="EMBL" id="CP000605">
    <property type="protein sequence ID" value="ACD99139.1"/>
    <property type="molecule type" value="Genomic_DNA"/>
</dbReference>
<dbReference type="RefSeq" id="WP_003829868.1">
    <property type="nucleotide sequence ID" value="NZ_AABM02000033.1"/>
</dbReference>
<dbReference type="SMR" id="B3DQ00"/>
<dbReference type="GeneID" id="69578903"/>
<dbReference type="KEGG" id="blj:BLD_1694"/>
<dbReference type="HOGENOM" id="CLU_046483_2_0_11"/>
<dbReference type="Proteomes" id="UP000002419">
    <property type="component" value="Chromosome"/>
</dbReference>
<dbReference type="GO" id="GO:0005737">
    <property type="term" value="C:cytoplasm"/>
    <property type="evidence" value="ECO:0007669"/>
    <property type="project" value="UniProtKB-ARBA"/>
</dbReference>
<dbReference type="GO" id="GO:0015935">
    <property type="term" value="C:small ribosomal subunit"/>
    <property type="evidence" value="ECO:0007669"/>
    <property type="project" value="TreeGrafter"/>
</dbReference>
<dbReference type="GO" id="GO:0003723">
    <property type="term" value="F:RNA binding"/>
    <property type="evidence" value="ECO:0007669"/>
    <property type="project" value="TreeGrafter"/>
</dbReference>
<dbReference type="GO" id="GO:0003735">
    <property type="term" value="F:structural constituent of ribosome"/>
    <property type="evidence" value="ECO:0007669"/>
    <property type="project" value="InterPro"/>
</dbReference>
<dbReference type="GO" id="GO:0006412">
    <property type="term" value="P:translation"/>
    <property type="evidence" value="ECO:0007669"/>
    <property type="project" value="UniProtKB-UniRule"/>
</dbReference>
<dbReference type="FunFam" id="3.30.230.10:FF:000001">
    <property type="entry name" value="30S ribosomal protein S9"/>
    <property type="match status" value="1"/>
</dbReference>
<dbReference type="Gene3D" id="3.30.230.10">
    <property type="match status" value="1"/>
</dbReference>
<dbReference type="HAMAP" id="MF_00532_B">
    <property type="entry name" value="Ribosomal_uS9_B"/>
    <property type="match status" value="1"/>
</dbReference>
<dbReference type="InterPro" id="IPR020568">
    <property type="entry name" value="Ribosomal_Su5_D2-typ_SF"/>
</dbReference>
<dbReference type="InterPro" id="IPR000754">
    <property type="entry name" value="Ribosomal_uS9"/>
</dbReference>
<dbReference type="InterPro" id="IPR023035">
    <property type="entry name" value="Ribosomal_uS9_bac/plastid"/>
</dbReference>
<dbReference type="InterPro" id="IPR020574">
    <property type="entry name" value="Ribosomal_uS9_CS"/>
</dbReference>
<dbReference type="InterPro" id="IPR014721">
    <property type="entry name" value="Ribsml_uS5_D2-typ_fold_subgr"/>
</dbReference>
<dbReference type="NCBIfam" id="NF001099">
    <property type="entry name" value="PRK00132.1"/>
    <property type="match status" value="1"/>
</dbReference>
<dbReference type="PANTHER" id="PTHR21569">
    <property type="entry name" value="RIBOSOMAL PROTEIN S9"/>
    <property type="match status" value="1"/>
</dbReference>
<dbReference type="PANTHER" id="PTHR21569:SF1">
    <property type="entry name" value="SMALL RIBOSOMAL SUBUNIT PROTEIN US9M"/>
    <property type="match status" value="1"/>
</dbReference>
<dbReference type="Pfam" id="PF00380">
    <property type="entry name" value="Ribosomal_S9"/>
    <property type="match status" value="1"/>
</dbReference>
<dbReference type="SUPFAM" id="SSF54211">
    <property type="entry name" value="Ribosomal protein S5 domain 2-like"/>
    <property type="match status" value="1"/>
</dbReference>
<dbReference type="PROSITE" id="PS00360">
    <property type="entry name" value="RIBOSOMAL_S9"/>
    <property type="match status" value="1"/>
</dbReference>
<reference key="1">
    <citation type="journal article" date="2008" name="BMC Genomics">
        <title>Comparative genomic analysis of the gut bacterium Bifidobacterium longum reveals loci susceptible to deletion during pure culture growth.</title>
        <authorList>
            <person name="Lee J.H."/>
            <person name="Karamychev V.N."/>
            <person name="Kozyavkin S.A."/>
            <person name="Mills D."/>
            <person name="Pavlov A.R."/>
            <person name="Pavlova N.V."/>
            <person name="Polouchine N.N."/>
            <person name="Richardson P.M."/>
            <person name="Shakhova V.V."/>
            <person name="Slesarev A.I."/>
            <person name="Weimer B."/>
            <person name="O'Sullivan D.J."/>
        </authorList>
    </citation>
    <scope>NUCLEOTIDE SEQUENCE [LARGE SCALE GENOMIC DNA]</scope>
    <source>
        <strain>DJO10A</strain>
    </source>
</reference>
<name>RS9_BIFLD</name>
<sequence length="163" mass="17607">MAENTNDSQVVETEEELTNYTTETNAGAGTGTSAIEPGYGTGRRKEAVARVRLVPGDGKWTINGRTLEEYFPSKLLQREVNSPIVLLKLEGKFDAIVLVDGGGTTGQAGAIRLGVARALNAIDRDANRAALKKAGFLTRDARVVERKKAGLHKARRAPQFSKR</sequence>